<evidence type="ECO:0000255" key="1">
    <source>
        <dbReference type="HAMAP-Rule" id="MF_00385"/>
    </source>
</evidence>
<evidence type="ECO:0000305" key="2"/>
<reference key="1">
    <citation type="submission" date="2009-01" db="EMBL/GenBank/DDBJ databases">
        <title>Complete sequence of Geobacter sp. FRC-32.</title>
        <authorList>
            <consortium name="US DOE Joint Genome Institute"/>
            <person name="Lucas S."/>
            <person name="Copeland A."/>
            <person name="Lapidus A."/>
            <person name="Glavina del Rio T."/>
            <person name="Dalin E."/>
            <person name="Tice H."/>
            <person name="Bruce D."/>
            <person name="Goodwin L."/>
            <person name="Pitluck S."/>
            <person name="Saunders E."/>
            <person name="Brettin T."/>
            <person name="Detter J.C."/>
            <person name="Han C."/>
            <person name="Larimer F."/>
            <person name="Land M."/>
            <person name="Hauser L."/>
            <person name="Kyrpides N."/>
            <person name="Ovchinnikova G."/>
            <person name="Kostka J."/>
            <person name="Richardson P."/>
        </authorList>
    </citation>
    <scope>NUCLEOTIDE SEQUENCE [LARGE SCALE GENOMIC DNA]</scope>
    <source>
        <strain>DSM 22248 / JCM 15807 / FRC-32</strain>
    </source>
</reference>
<name>RS16_GEODF</name>
<accession>B9M591</accession>
<sequence>MATKIRLARAGAKKKPFYQVVVADERCKRDGRFIENVGTYDPNQNPAVFKLEEGKTLEWLGKGAQPTDTVKQILKKAGIWEKFVSKLA</sequence>
<protein>
    <recommendedName>
        <fullName evidence="1">Small ribosomal subunit protein bS16</fullName>
    </recommendedName>
    <alternativeName>
        <fullName evidence="2">30S ribosomal protein S16</fullName>
    </alternativeName>
</protein>
<keyword id="KW-1185">Reference proteome</keyword>
<keyword id="KW-0687">Ribonucleoprotein</keyword>
<keyword id="KW-0689">Ribosomal protein</keyword>
<feature type="chain" id="PRO_1000196412" description="Small ribosomal subunit protein bS16">
    <location>
        <begin position="1"/>
        <end position="88"/>
    </location>
</feature>
<proteinExistence type="inferred from homology"/>
<dbReference type="EMBL" id="CP001390">
    <property type="protein sequence ID" value="ACM19846.1"/>
    <property type="molecule type" value="Genomic_DNA"/>
</dbReference>
<dbReference type="RefSeq" id="WP_012646575.1">
    <property type="nucleotide sequence ID" value="NC_011979.1"/>
</dbReference>
<dbReference type="SMR" id="B9M591"/>
<dbReference type="STRING" id="316067.Geob_1487"/>
<dbReference type="KEGG" id="geo:Geob_1487"/>
<dbReference type="eggNOG" id="COG0228">
    <property type="taxonomic scope" value="Bacteria"/>
</dbReference>
<dbReference type="HOGENOM" id="CLU_100590_5_0_7"/>
<dbReference type="OrthoDB" id="9807878at2"/>
<dbReference type="Proteomes" id="UP000007721">
    <property type="component" value="Chromosome"/>
</dbReference>
<dbReference type="GO" id="GO:0005737">
    <property type="term" value="C:cytoplasm"/>
    <property type="evidence" value="ECO:0007669"/>
    <property type="project" value="UniProtKB-ARBA"/>
</dbReference>
<dbReference type="GO" id="GO:0015935">
    <property type="term" value="C:small ribosomal subunit"/>
    <property type="evidence" value="ECO:0007669"/>
    <property type="project" value="TreeGrafter"/>
</dbReference>
<dbReference type="GO" id="GO:0003735">
    <property type="term" value="F:structural constituent of ribosome"/>
    <property type="evidence" value="ECO:0007669"/>
    <property type="project" value="InterPro"/>
</dbReference>
<dbReference type="GO" id="GO:0006412">
    <property type="term" value="P:translation"/>
    <property type="evidence" value="ECO:0007669"/>
    <property type="project" value="UniProtKB-UniRule"/>
</dbReference>
<dbReference type="Gene3D" id="3.30.1320.10">
    <property type="match status" value="1"/>
</dbReference>
<dbReference type="HAMAP" id="MF_00385">
    <property type="entry name" value="Ribosomal_bS16"/>
    <property type="match status" value="1"/>
</dbReference>
<dbReference type="InterPro" id="IPR000307">
    <property type="entry name" value="Ribosomal_bS16"/>
</dbReference>
<dbReference type="InterPro" id="IPR020592">
    <property type="entry name" value="Ribosomal_bS16_CS"/>
</dbReference>
<dbReference type="InterPro" id="IPR023803">
    <property type="entry name" value="Ribosomal_bS16_dom_sf"/>
</dbReference>
<dbReference type="NCBIfam" id="TIGR00002">
    <property type="entry name" value="S16"/>
    <property type="match status" value="1"/>
</dbReference>
<dbReference type="PANTHER" id="PTHR12919">
    <property type="entry name" value="30S RIBOSOMAL PROTEIN S16"/>
    <property type="match status" value="1"/>
</dbReference>
<dbReference type="PANTHER" id="PTHR12919:SF20">
    <property type="entry name" value="SMALL RIBOSOMAL SUBUNIT PROTEIN BS16M"/>
    <property type="match status" value="1"/>
</dbReference>
<dbReference type="Pfam" id="PF00886">
    <property type="entry name" value="Ribosomal_S16"/>
    <property type="match status" value="1"/>
</dbReference>
<dbReference type="SUPFAM" id="SSF54565">
    <property type="entry name" value="Ribosomal protein S16"/>
    <property type="match status" value="1"/>
</dbReference>
<dbReference type="PROSITE" id="PS00732">
    <property type="entry name" value="RIBOSOMAL_S16"/>
    <property type="match status" value="1"/>
</dbReference>
<gene>
    <name evidence="1" type="primary">rpsP</name>
    <name type="ordered locus">Geob_1487</name>
</gene>
<organism>
    <name type="scientific">Geotalea daltonii (strain DSM 22248 / JCM 15807 / FRC-32)</name>
    <name type="common">Geobacter daltonii</name>
    <dbReference type="NCBI Taxonomy" id="316067"/>
    <lineage>
        <taxon>Bacteria</taxon>
        <taxon>Pseudomonadati</taxon>
        <taxon>Thermodesulfobacteriota</taxon>
        <taxon>Desulfuromonadia</taxon>
        <taxon>Geobacterales</taxon>
        <taxon>Geobacteraceae</taxon>
        <taxon>Geotalea</taxon>
    </lineage>
</organism>
<comment type="similarity">
    <text evidence="1">Belongs to the bacterial ribosomal protein bS16 family.</text>
</comment>